<feature type="chain" id="PRO_0000244010" description="Putative BTB/POZ domain-containing protein R541">
    <location>
        <begin position="1"/>
        <end position="459"/>
    </location>
</feature>
<feature type="domain" description="BTB" evidence="1">
    <location>
        <begin position="76"/>
        <end position="143"/>
    </location>
</feature>
<reference key="1">
    <citation type="journal article" date="2004" name="Science">
        <title>The 1.2-megabase genome sequence of Mimivirus.</title>
        <authorList>
            <person name="Raoult D."/>
            <person name="Audic S."/>
            <person name="Robert C."/>
            <person name="Abergel C."/>
            <person name="Renesto P."/>
            <person name="Ogata H."/>
            <person name="La Scola B."/>
            <person name="Susan M."/>
            <person name="Claverie J.-M."/>
        </authorList>
    </citation>
    <scope>NUCLEOTIDE SEQUENCE [LARGE SCALE GENOMIC DNA]</scope>
    <source>
        <strain>Rowbotham-Bradford</strain>
    </source>
</reference>
<gene>
    <name type="ordered locus">MIMI_R541</name>
</gene>
<dbReference type="EMBL" id="AY653733">
    <property type="protein sequence ID" value="AAV50805.1"/>
    <property type="molecule type" value="Genomic_DNA"/>
</dbReference>
<dbReference type="SMR" id="Q5UQA8"/>
<dbReference type="KEGG" id="vg:9925175"/>
<dbReference type="Proteomes" id="UP000001134">
    <property type="component" value="Genome"/>
</dbReference>
<dbReference type="GO" id="GO:0051260">
    <property type="term" value="P:protein homooligomerization"/>
    <property type="evidence" value="ECO:0007669"/>
    <property type="project" value="InterPro"/>
</dbReference>
<dbReference type="Gene3D" id="3.30.710.10">
    <property type="entry name" value="Potassium Channel Kv1.1, Chain A"/>
    <property type="match status" value="1"/>
</dbReference>
<dbReference type="InterPro" id="IPR000210">
    <property type="entry name" value="BTB/POZ_dom"/>
</dbReference>
<dbReference type="InterPro" id="IPR011333">
    <property type="entry name" value="SKP1/BTB/POZ_sf"/>
</dbReference>
<dbReference type="InterPro" id="IPR003131">
    <property type="entry name" value="T1-type_BTB"/>
</dbReference>
<dbReference type="Pfam" id="PF02214">
    <property type="entry name" value="BTB_2"/>
    <property type="match status" value="1"/>
</dbReference>
<dbReference type="SUPFAM" id="SSF54695">
    <property type="entry name" value="POZ domain"/>
    <property type="match status" value="1"/>
</dbReference>
<dbReference type="PROSITE" id="PS50097">
    <property type="entry name" value="BTB"/>
    <property type="match status" value="1"/>
</dbReference>
<comment type="similarity">
    <text evidence="2">Belongs to the mimivirus BTB/WD family.</text>
</comment>
<accession>Q5UQA8</accession>
<sequence length="459" mass="54813">MENTTVINIYCADKFFQTTYSTIKKCNFLTSKLIDNEIRLNIDPIHIEYLLNYLRGYLLDELCMEKIGYMIDVLPNHITINVGGKYYYLDRDFLCEYLEYFKVFTEYNKHLDPDYSSVLIDRSYVMFDKILEYNQKSTNIELYNFIKQELEFYLFKKEHLTNNQISSETKRQSIELSELPISKITNYEFIKYITKKTKTGNIVYKSIHENHYYHYCNSKILTHENTIILIKLNGSNIEQLLHNIVSFKRDYCDHTKQEDITISKLFQKKIAVHDKSNNLIIMDIELNDKDITIDFNYFNDGSVYIFHPINLINSEKTFFKKICKRVCQTITCRHNINMVKINITDFIEKITCNREKCVYIFDKIYFVIPNHNVSINYVELISSDFGNLTTSELLPSKTNPNKFMIKTLQTANKNIRFNICVDAIHRYSRNYLEIYYDLKQPVNTDINIMYKYHIIKQSY</sequence>
<organism>
    <name type="scientific">Acanthamoeba polyphaga mimivirus</name>
    <name type="common">APMV</name>
    <dbReference type="NCBI Taxonomy" id="212035"/>
    <lineage>
        <taxon>Viruses</taxon>
        <taxon>Varidnaviria</taxon>
        <taxon>Bamfordvirae</taxon>
        <taxon>Nucleocytoviricota</taxon>
        <taxon>Megaviricetes</taxon>
        <taxon>Imitervirales</taxon>
        <taxon>Mimiviridae</taxon>
        <taxon>Megamimivirinae</taxon>
        <taxon>Mimivirus</taxon>
        <taxon>Mimivirus bradfordmassiliense</taxon>
    </lineage>
</organism>
<organismHost>
    <name type="scientific">Acanthamoeba polyphaga</name>
    <name type="common">Amoeba</name>
    <dbReference type="NCBI Taxonomy" id="5757"/>
</organismHost>
<name>YR541_MIMIV</name>
<proteinExistence type="inferred from homology"/>
<evidence type="ECO:0000255" key="1">
    <source>
        <dbReference type="PROSITE-ProRule" id="PRU00037"/>
    </source>
</evidence>
<evidence type="ECO:0000305" key="2"/>
<protein>
    <recommendedName>
        <fullName>Putative BTB/POZ domain-containing protein R541</fullName>
    </recommendedName>
</protein>
<keyword id="KW-1185">Reference proteome</keyword>